<protein>
    <recommendedName>
        <fullName evidence="1">Clustered mitochondria protein homolog</fullName>
    </recommendedName>
    <alternativeName>
        <fullName evidence="1">Protein TIF31 homolog</fullName>
    </alternativeName>
</protein>
<organism>
    <name type="scientific">Candida glabrata (strain ATCC 2001 / BCRC 20586 / JCM 3761 / NBRC 0622 / NRRL Y-65 / CBS 138)</name>
    <name type="common">Yeast</name>
    <name type="synonym">Nakaseomyces glabratus</name>
    <dbReference type="NCBI Taxonomy" id="284593"/>
    <lineage>
        <taxon>Eukaryota</taxon>
        <taxon>Fungi</taxon>
        <taxon>Dikarya</taxon>
        <taxon>Ascomycota</taxon>
        <taxon>Saccharomycotina</taxon>
        <taxon>Saccharomycetes</taxon>
        <taxon>Saccharomycetales</taxon>
        <taxon>Saccharomycetaceae</taxon>
        <taxon>Nakaseomyces</taxon>
    </lineage>
</organism>
<gene>
    <name evidence="1" type="primary">CLU1</name>
    <name evidence="1" type="synonym">TIF31</name>
    <name type="ordered locus">CAGL0M07722g</name>
</gene>
<evidence type="ECO:0000255" key="1">
    <source>
        <dbReference type="HAMAP-Rule" id="MF_03013"/>
    </source>
</evidence>
<evidence type="ECO:0000255" key="2">
    <source>
        <dbReference type="PROSITE-ProRule" id="PRU01167"/>
    </source>
</evidence>
<evidence type="ECO:0000256" key="3">
    <source>
        <dbReference type="SAM" id="MobiDB-lite"/>
    </source>
</evidence>
<dbReference type="EMBL" id="CR380959">
    <property type="protein sequence ID" value="CAG62660.1"/>
    <property type="molecule type" value="Genomic_DNA"/>
</dbReference>
<dbReference type="RefSeq" id="XP_449684.1">
    <property type="nucleotide sequence ID" value="XM_449684.1"/>
</dbReference>
<dbReference type="SMR" id="Q6FJB0"/>
<dbReference type="FunCoup" id="Q6FJB0">
    <property type="interactions" value="1119"/>
</dbReference>
<dbReference type="STRING" id="284593.Q6FJB0"/>
<dbReference type="EnsemblFungi" id="CAGL0M07722g-T">
    <property type="protein sequence ID" value="CAGL0M07722g-T-p1"/>
    <property type="gene ID" value="CAGL0M07722g"/>
</dbReference>
<dbReference type="KEGG" id="cgr:2891734"/>
<dbReference type="CGD" id="CAL0136551">
    <property type="gene designation" value="CAGL0M07722g"/>
</dbReference>
<dbReference type="VEuPathDB" id="FungiDB:B1J91_M07722g"/>
<dbReference type="VEuPathDB" id="FungiDB:CAGL0M07722g"/>
<dbReference type="eggNOG" id="KOG1839">
    <property type="taxonomic scope" value="Eukaryota"/>
</dbReference>
<dbReference type="HOGENOM" id="CLU_003256_2_0_1"/>
<dbReference type="InParanoid" id="Q6FJB0"/>
<dbReference type="OMA" id="HPVWDKD"/>
<dbReference type="Proteomes" id="UP000002428">
    <property type="component" value="Chromosome M"/>
</dbReference>
<dbReference type="GO" id="GO:0005737">
    <property type="term" value="C:cytoplasm"/>
    <property type="evidence" value="ECO:0007669"/>
    <property type="project" value="UniProtKB-SubCell"/>
</dbReference>
<dbReference type="GO" id="GO:0003729">
    <property type="term" value="F:mRNA binding"/>
    <property type="evidence" value="ECO:0007669"/>
    <property type="project" value="TreeGrafter"/>
</dbReference>
<dbReference type="GO" id="GO:0048312">
    <property type="term" value="P:intracellular distribution of mitochondria"/>
    <property type="evidence" value="ECO:0007669"/>
    <property type="project" value="TreeGrafter"/>
</dbReference>
<dbReference type="GO" id="GO:0007005">
    <property type="term" value="P:mitochondrion organization"/>
    <property type="evidence" value="ECO:0007669"/>
    <property type="project" value="UniProtKB-UniRule"/>
</dbReference>
<dbReference type="CDD" id="cd15466">
    <property type="entry name" value="CLU-central"/>
    <property type="match status" value="1"/>
</dbReference>
<dbReference type="Gene3D" id="3.30.2280.10">
    <property type="entry name" value="Hypothetical protein (hspc210)"/>
    <property type="match status" value="1"/>
</dbReference>
<dbReference type="Gene3D" id="1.25.40.10">
    <property type="entry name" value="Tetratricopeptide repeat domain"/>
    <property type="match status" value="1"/>
</dbReference>
<dbReference type="HAMAP" id="MF_03013">
    <property type="entry name" value="CLU"/>
    <property type="match status" value="1"/>
</dbReference>
<dbReference type="InterPro" id="IPR033646">
    <property type="entry name" value="CLU-central"/>
</dbReference>
<dbReference type="InterPro" id="IPR025697">
    <property type="entry name" value="CLU_dom"/>
</dbReference>
<dbReference type="InterPro" id="IPR028275">
    <property type="entry name" value="CLU_N"/>
</dbReference>
<dbReference type="InterPro" id="IPR027523">
    <property type="entry name" value="CLU_prot"/>
</dbReference>
<dbReference type="InterPro" id="IPR023231">
    <property type="entry name" value="GSKIP_dom_sf"/>
</dbReference>
<dbReference type="InterPro" id="IPR011990">
    <property type="entry name" value="TPR-like_helical_dom_sf"/>
</dbReference>
<dbReference type="PANTHER" id="PTHR12601:SF6">
    <property type="entry name" value="CLUSTERED MITOCHONDRIA PROTEIN HOMOLOG"/>
    <property type="match status" value="1"/>
</dbReference>
<dbReference type="PANTHER" id="PTHR12601">
    <property type="entry name" value="EUKARYOTIC TRANSLATION INITIATION FACTOR 3 SUBUNIT EIF-3"/>
    <property type="match status" value="1"/>
</dbReference>
<dbReference type="Pfam" id="PF13236">
    <property type="entry name" value="CLU"/>
    <property type="match status" value="1"/>
</dbReference>
<dbReference type="Pfam" id="PF15044">
    <property type="entry name" value="CLU_N"/>
    <property type="match status" value="1"/>
</dbReference>
<dbReference type="Pfam" id="PF12807">
    <property type="entry name" value="eIF3_p135"/>
    <property type="match status" value="1"/>
</dbReference>
<dbReference type="Pfam" id="PF13374">
    <property type="entry name" value="TPR_10"/>
    <property type="match status" value="1"/>
</dbReference>
<dbReference type="SUPFAM" id="SSF103107">
    <property type="entry name" value="Hypothetical protein c14orf129, hspc210"/>
    <property type="match status" value="1"/>
</dbReference>
<dbReference type="PROSITE" id="PS51823">
    <property type="entry name" value="CLU"/>
    <property type="match status" value="1"/>
</dbReference>
<keyword id="KW-0963">Cytoplasm</keyword>
<keyword id="KW-1185">Reference proteome</keyword>
<keyword id="KW-0677">Repeat</keyword>
<keyword id="KW-0802">TPR repeat</keyword>
<feature type="chain" id="PRO_0000366401" description="Clustered mitochondria protein homolog">
    <location>
        <begin position="1"/>
        <end position="1267"/>
    </location>
</feature>
<feature type="repeat" description="TPR 1">
    <location>
        <begin position="64"/>
        <end position="102"/>
    </location>
</feature>
<feature type="domain" description="Clu" evidence="2">
    <location>
        <begin position="329"/>
        <end position="586"/>
    </location>
</feature>
<feature type="repeat" description="TPR 2">
    <location>
        <begin position="420"/>
        <end position="453"/>
    </location>
</feature>
<feature type="repeat" description="TPR 3">
    <location>
        <begin position="716"/>
        <end position="749"/>
    </location>
</feature>
<feature type="repeat" description="TPR 4">
    <location>
        <begin position="795"/>
        <end position="830"/>
    </location>
</feature>
<feature type="repeat" description="TPR 5">
    <location>
        <begin position="904"/>
        <end position="939"/>
    </location>
</feature>
<feature type="repeat" description="TPR 6">
    <location>
        <begin position="1010"/>
        <end position="1043"/>
    </location>
</feature>
<feature type="repeat" description="TPR 7">
    <location>
        <begin position="1138"/>
        <end position="1171"/>
    </location>
</feature>
<feature type="region of interest" description="Disordered" evidence="3">
    <location>
        <begin position="1203"/>
        <end position="1267"/>
    </location>
</feature>
<feature type="compositionally biased region" description="Polar residues" evidence="3">
    <location>
        <begin position="1203"/>
        <end position="1219"/>
    </location>
</feature>
<feature type="compositionally biased region" description="Basic and acidic residues" evidence="3">
    <location>
        <begin position="1224"/>
        <end position="1239"/>
    </location>
</feature>
<feature type="compositionally biased region" description="Basic residues" evidence="3">
    <location>
        <begin position="1254"/>
        <end position="1267"/>
    </location>
</feature>
<accession>Q6FJB0</accession>
<name>CLU_CANGA</name>
<proteinExistence type="inferred from homology"/>
<sequence length="1267" mass="143838">MSQPSDIVKVIVALPTLSKKPQQGKKKKSKELEEITLQFRKDSKLQNVLDFLSIAPATKYFTNYNLKNSTGDLLLSSEEKTLRELCSDKDEYKVALELKPYNQYQALKHVLTSRDFFGFASETEDGLSNVAVSTGSKFYKLPLKEIKEKSPENEDKDTENKKPTSMNVTDEEKVEFNHMVHGLFETLKKEKKVLLKDLMNTDTSVVTPCLRSINFSPYNPVPAFYRTKGHLFYLQIVTLEGESLQVTAIPSGFYINKSTTSKFDPSPKENDGHVDTVHYTLYDLLASSSKNFVTHISSLEKKFDDLESVTYVRPACTTLNKPWLIPAIPTNGPDYLRTQIDSFNFEPERNFNDEFQSIKEIPTNTLQARIESERIFAKLTHEFTINATKGAMDILYGNGTAMNPDSPLEEQIFLKNNIFYSFVGDLNQTYADKGGDEAAIASANQDLRTLNMLTRLNLPNIHHLLTTIVDFGGKRILAQTPVPGLLSPMGVKITTNEETKEETVSELSSDICVKYGLDENEKKVVFNEEFDEILNDQFAKSFHLKKHTIQGTELVFSSQSKGIVGSDKRHYILDLANTYPLDVEFAKENFDDVKEASKKYPHRQTLIRPELVEKWWATKIENDKVELVKAYEENLYSYNPDAYQVPGVEDETVVEISKYLNEEIIPNVVQDYLNGNIISPYNGEHLADTFHKNGVNMRYLGKFANLVKEELRKQEEAHEAKLAQVIVDNKEYEEWEKSYLQKIETMIKERQAKINKLVQEGKEVPKELTEDLKLDDNEIKKPSTEKPVVVSYDELVPLIKTAELEIISRSLKHILRKYSRSLPPIVIPALISFVFNLLFGTTYNPAPAVESVDPLYPVDQYEFKNLTHDTLLKEIEQEAVVRYRYELEGDWFAEHELYPFTLIRSICNKFGVQLLNKDYFFSTEQLEEYKQSLDKKSRAKYVAPLTTFSVSDLTVIPKIKAIDYSSPISEELWSQGASIINENQKDGLTLLAQSIGFKEEVNSILHSSVAEKYLTLSTIYNKLGLNAEAIAFCRKSCAIYERVCGVDSFELLRALTNLATLEFANESPYNVALIYQRIIQTVSGYGLDKIHHPIFTNIFNYLEQLSLGVQDAKLAVEVLKSLGDFLVSIDGTESLPYAYIKSKLGNLLAADNRFSDALNQIKVAERIFTKELGTNHGSTAQARQWVDGLTNLIKDVNQKKQLQQDQTAASGLKQQPQKSKSGHNKKETTNPDLADKSVDELLSFIEGEDGKSSKTTKKSKSKGKNKK</sequence>
<reference key="1">
    <citation type="journal article" date="2004" name="Nature">
        <title>Genome evolution in yeasts.</title>
        <authorList>
            <person name="Dujon B."/>
            <person name="Sherman D."/>
            <person name="Fischer G."/>
            <person name="Durrens P."/>
            <person name="Casaregola S."/>
            <person name="Lafontaine I."/>
            <person name="de Montigny J."/>
            <person name="Marck C."/>
            <person name="Neuveglise C."/>
            <person name="Talla E."/>
            <person name="Goffard N."/>
            <person name="Frangeul L."/>
            <person name="Aigle M."/>
            <person name="Anthouard V."/>
            <person name="Babour A."/>
            <person name="Barbe V."/>
            <person name="Barnay S."/>
            <person name="Blanchin S."/>
            <person name="Beckerich J.-M."/>
            <person name="Beyne E."/>
            <person name="Bleykasten C."/>
            <person name="Boisrame A."/>
            <person name="Boyer J."/>
            <person name="Cattolico L."/>
            <person name="Confanioleri F."/>
            <person name="de Daruvar A."/>
            <person name="Despons L."/>
            <person name="Fabre E."/>
            <person name="Fairhead C."/>
            <person name="Ferry-Dumazet H."/>
            <person name="Groppi A."/>
            <person name="Hantraye F."/>
            <person name="Hennequin C."/>
            <person name="Jauniaux N."/>
            <person name="Joyet P."/>
            <person name="Kachouri R."/>
            <person name="Kerrest A."/>
            <person name="Koszul R."/>
            <person name="Lemaire M."/>
            <person name="Lesur I."/>
            <person name="Ma L."/>
            <person name="Muller H."/>
            <person name="Nicaud J.-M."/>
            <person name="Nikolski M."/>
            <person name="Oztas S."/>
            <person name="Ozier-Kalogeropoulos O."/>
            <person name="Pellenz S."/>
            <person name="Potier S."/>
            <person name="Richard G.-F."/>
            <person name="Straub M.-L."/>
            <person name="Suleau A."/>
            <person name="Swennen D."/>
            <person name="Tekaia F."/>
            <person name="Wesolowski-Louvel M."/>
            <person name="Westhof E."/>
            <person name="Wirth B."/>
            <person name="Zeniou-Meyer M."/>
            <person name="Zivanovic Y."/>
            <person name="Bolotin-Fukuhara M."/>
            <person name="Thierry A."/>
            <person name="Bouchier C."/>
            <person name="Caudron B."/>
            <person name="Scarpelli C."/>
            <person name="Gaillardin C."/>
            <person name="Weissenbach J."/>
            <person name="Wincker P."/>
            <person name="Souciet J.-L."/>
        </authorList>
    </citation>
    <scope>NUCLEOTIDE SEQUENCE [LARGE SCALE GENOMIC DNA]</scope>
    <source>
        <strain>ATCC 2001 / BCRC 20586 / JCM 3761 / NBRC 0622 / NRRL Y-65 / CBS 138</strain>
    </source>
</reference>
<comment type="function">
    <text evidence="1">mRNA-binding protein involved in proper cytoplasmic distribution of mitochondria.</text>
</comment>
<comment type="subunit">
    <text evidence="1">May associate with the eukaryotic translation initiation factor 3 (eIF-3) complex.</text>
</comment>
<comment type="subcellular location">
    <subcellularLocation>
        <location evidence="1">Cytoplasm</location>
    </subcellularLocation>
</comment>
<comment type="similarity">
    <text evidence="1">Belongs to the CLU family.</text>
</comment>